<gene>
    <name evidence="2" type="primary">NCS2</name>
    <name evidence="2" type="synonym">CTU2</name>
    <name evidence="2" type="synonym">TUC2</name>
    <name type="ORF">SCRG_03253</name>
</gene>
<organism>
    <name type="scientific">Saccharomyces cerevisiae (strain RM11-1a)</name>
    <name type="common">Baker's yeast</name>
    <dbReference type="NCBI Taxonomy" id="285006"/>
    <lineage>
        <taxon>Eukaryota</taxon>
        <taxon>Fungi</taxon>
        <taxon>Dikarya</taxon>
        <taxon>Ascomycota</taxon>
        <taxon>Saccharomycotina</taxon>
        <taxon>Saccharomycetes</taxon>
        <taxon>Saccharomycetales</taxon>
        <taxon>Saccharomycetaceae</taxon>
        <taxon>Saccharomyces</taxon>
    </lineage>
</organism>
<reference key="1">
    <citation type="submission" date="2005-03" db="EMBL/GenBank/DDBJ databases">
        <title>Annotation of the Saccharomyces cerevisiae RM11-1a genome.</title>
        <authorList>
            <consortium name="The Broad Institute Genome Sequencing Platform"/>
            <person name="Birren B.W."/>
            <person name="Lander E.S."/>
            <person name="Galagan J.E."/>
            <person name="Nusbaum C."/>
            <person name="Devon K."/>
            <person name="Cuomo C."/>
            <person name="Jaffe D.B."/>
            <person name="Butler J."/>
            <person name="Alvarez P."/>
            <person name="Gnerre S."/>
            <person name="Grabherr M."/>
            <person name="Kleber M."/>
            <person name="Mauceli E.W."/>
            <person name="Brockman W."/>
            <person name="MacCallum I.A."/>
            <person name="Rounsley S."/>
            <person name="Young S.K."/>
            <person name="LaButti K."/>
            <person name="Pushparaj V."/>
            <person name="DeCaprio D."/>
            <person name="Crawford M."/>
            <person name="Koehrsen M."/>
            <person name="Engels R."/>
            <person name="Montgomery P."/>
            <person name="Pearson M."/>
            <person name="Howarth C."/>
            <person name="Larson L."/>
            <person name="Luoma S."/>
            <person name="White J."/>
            <person name="O'Leary S."/>
            <person name="Kodira C.D."/>
            <person name="Zeng Q."/>
            <person name="Yandava C."/>
            <person name="Alvarado L."/>
            <person name="Pratt S."/>
            <person name="Kruglyak L."/>
        </authorList>
    </citation>
    <scope>NUCLEOTIDE SEQUENCE [LARGE SCALE GENOMIC DNA]</scope>
    <source>
        <strain>RM11-1a</strain>
    </source>
</reference>
<proteinExistence type="inferred from homology"/>
<evidence type="ECO:0000250" key="1">
    <source>
        <dbReference type="UniProtKB" id="P53923"/>
    </source>
</evidence>
<evidence type="ECO:0000255" key="2">
    <source>
        <dbReference type="HAMAP-Rule" id="MF_03054"/>
    </source>
</evidence>
<protein>
    <recommendedName>
        <fullName evidence="2">Cytoplasmic tRNA 2-thiolation protein 2</fullName>
    </recommendedName>
    <alternativeName>
        <fullName evidence="2">Needs CLA4 to survive protein 2</fullName>
    </alternativeName>
    <alternativeName>
        <fullName evidence="2">Thiolation of uridine in cytoplasmic tRNA protein 2</fullName>
    </alternativeName>
</protein>
<comment type="function">
    <text evidence="2">Plays a central role in 2-thiolation of mcm(5)S(2)U at tRNA wobble positions of tRNA(Lys), tRNA(Glu) and tRNA(Gln). May act by forming a heterodimer with NCS6 that ligates sulfur from thiocarboxylated URM1 onto the uridine of tRNAs at wobble position. Prior mcm(5) tRNA modification by the elongator complex is required for 2-thiolation. May also be involved in protein urmylation.</text>
</comment>
<comment type="pathway">
    <text evidence="2">tRNA modification; 5-methoxycarbonylmethyl-2-thiouridine-tRNA biosynthesis.</text>
</comment>
<comment type="subunit">
    <text evidence="2">Interacts with NCS6 and URM1. May act by forming a heterodimer with NCS6.</text>
</comment>
<comment type="subcellular location">
    <subcellularLocation>
        <location evidence="2">Cytoplasm</location>
    </subcellularLocation>
</comment>
<comment type="similarity">
    <text evidence="2">Belongs to the CTU2/NCS2 family.</text>
</comment>
<keyword id="KW-0963">Cytoplasm</keyword>
<keyword id="KW-0597">Phosphoprotein</keyword>
<keyword id="KW-0819">tRNA processing</keyword>
<dbReference type="EMBL" id="CH408049">
    <property type="protein sequence ID" value="EDV12371.1"/>
    <property type="molecule type" value="Genomic_DNA"/>
</dbReference>
<dbReference type="HOGENOM" id="CLU_024534_1_0_1"/>
<dbReference type="OrthoDB" id="38737at4893"/>
<dbReference type="UniPathway" id="UPA00988"/>
<dbReference type="Proteomes" id="UP000008335">
    <property type="component" value="Unassembled WGS sequence"/>
</dbReference>
<dbReference type="GO" id="GO:0005829">
    <property type="term" value="C:cytosol"/>
    <property type="evidence" value="ECO:0000250"/>
    <property type="project" value="UniProtKB"/>
</dbReference>
<dbReference type="GO" id="GO:0016779">
    <property type="term" value="F:nucleotidyltransferase activity"/>
    <property type="evidence" value="ECO:0007669"/>
    <property type="project" value="UniProtKB-UniRule"/>
</dbReference>
<dbReference type="GO" id="GO:0016783">
    <property type="term" value="F:sulfurtransferase activity"/>
    <property type="evidence" value="ECO:0007669"/>
    <property type="project" value="TreeGrafter"/>
</dbReference>
<dbReference type="GO" id="GO:0000049">
    <property type="term" value="F:tRNA binding"/>
    <property type="evidence" value="ECO:0007669"/>
    <property type="project" value="InterPro"/>
</dbReference>
<dbReference type="GO" id="GO:0032447">
    <property type="term" value="P:protein urmylation"/>
    <property type="evidence" value="ECO:0007669"/>
    <property type="project" value="UniProtKB-UniRule"/>
</dbReference>
<dbReference type="GO" id="GO:0034227">
    <property type="term" value="P:tRNA thio-modification"/>
    <property type="evidence" value="ECO:0000250"/>
    <property type="project" value="UniProtKB"/>
</dbReference>
<dbReference type="GO" id="GO:0002143">
    <property type="term" value="P:tRNA wobble position uridine thiolation"/>
    <property type="evidence" value="ECO:0007669"/>
    <property type="project" value="TreeGrafter"/>
</dbReference>
<dbReference type="GO" id="GO:0002098">
    <property type="term" value="P:tRNA wobble uridine modification"/>
    <property type="evidence" value="ECO:0000250"/>
    <property type="project" value="UniProtKB"/>
</dbReference>
<dbReference type="Gene3D" id="3.40.50.620">
    <property type="entry name" value="HUPs"/>
    <property type="match status" value="1"/>
</dbReference>
<dbReference type="HAMAP" id="MF_03054">
    <property type="entry name" value="CTU2"/>
    <property type="match status" value="1"/>
</dbReference>
<dbReference type="InterPro" id="IPR019407">
    <property type="entry name" value="CTU2"/>
</dbReference>
<dbReference type="InterPro" id="IPR014729">
    <property type="entry name" value="Rossmann-like_a/b/a_fold"/>
</dbReference>
<dbReference type="PANTHER" id="PTHR20882">
    <property type="entry name" value="CYTOPLASMIC TRNA 2-THIOLATION PROTEIN 2"/>
    <property type="match status" value="1"/>
</dbReference>
<dbReference type="PANTHER" id="PTHR20882:SF14">
    <property type="entry name" value="CYTOPLASMIC TRNA 2-THIOLATION PROTEIN 2"/>
    <property type="match status" value="1"/>
</dbReference>
<dbReference type="Pfam" id="PF10288">
    <property type="entry name" value="CTU2"/>
    <property type="match status" value="1"/>
</dbReference>
<accession>B3LNX6</accession>
<sequence length="493" mass="56434">MECQRCPASARNPATVESRKEKFCDECFIKFVSTKQRKQMMKDEYFRNLFKVIYPFEKEGSVSKILLPLSLSDSGSLVMLDIVHDLLLEQTKQHNNRTGFTVDVLTVFTEENVSVIKERMESLINEKMSQLNKISNIFNVHFIDVNEFFNNASEVSTFIIDNENFEIFSKSKSVDDSNILTLKEILGKYCLNNSSRSDLISIIKTQLIKHFAYENGYNAIMWGHSMTKLSEVIISLVVKGKGSQIATFLDSESFDTLNNKPCKYKNLYPMKDLLSVEIESFLQIRNLAQFLINVEETNVKPNCLIARKSLPSLGQQKLVKNMTINEITNKYFQDIQNDYSNIISTVLRTADKLTQPKSSMAKPSQCQICQSKIYTNPSNWLNRITVTSPYPVETTEEKYLFKQWQDSKLGQSHTHYVELLNEIKQGASNSLDVEDGDVKLCYGCLILLNTSIKDKNLVWPKVDTMDITANATNNNKELSQILDQFEINSDGEE</sequence>
<name>CTU2_YEAS1</name>
<feature type="chain" id="PRO_0000359409" description="Cytoplasmic tRNA 2-thiolation protein 2">
    <location>
        <begin position="1"/>
        <end position="493"/>
    </location>
</feature>
<feature type="modified residue" description="Phosphoserine" evidence="1">
    <location>
        <position position="489"/>
    </location>
</feature>